<evidence type="ECO:0000250" key="1">
    <source>
        <dbReference type="UniProtKB" id="A0A087WRU1"/>
    </source>
</evidence>
<evidence type="ECO:0000256" key="2">
    <source>
        <dbReference type="SAM" id="MobiDB-lite"/>
    </source>
</evidence>
<evidence type="ECO:0000269" key="3">
    <source>
    </source>
</evidence>
<evidence type="ECO:0000269" key="4">
    <source>
    </source>
</evidence>
<evidence type="ECO:0000303" key="5">
    <source>
    </source>
</evidence>
<evidence type="ECO:0000303" key="6">
    <source>
    </source>
</evidence>
<evidence type="ECO:0000303" key="7">
    <source>
    </source>
</evidence>
<evidence type="ECO:0000303" key="8">
    <source ref="2"/>
</evidence>
<evidence type="ECO:0000305" key="9"/>
<evidence type="ECO:0000312" key="10">
    <source>
        <dbReference type="HGNC" id="HGNC:26846"/>
    </source>
</evidence>
<reference key="1">
    <citation type="journal article" date="2004" name="Nat. Genet.">
        <title>Complete sequencing and characterization of 21,243 full-length human cDNAs.</title>
        <authorList>
            <person name="Ota T."/>
            <person name="Suzuki Y."/>
            <person name="Nishikawa T."/>
            <person name="Otsuki T."/>
            <person name="Sugiyama T."/>
            <person name="Irie R."/>
            <person name="Wakamatsu A."/>
            <person name="Hayashi K."/>
            <person name="Sato H."/>
            <person name="Nagai K."/>
            <person name="Kimura K."/>
            <person name="Makita H."/>
            <person name="Sekine M."/>
            <person name="Obayashi M."/>
            <person name="Nishi T."/>
            <person name="Shibahara T."/>
            <person name="Tanaka T."/>
            <person name="Ishii S."/>
            <person name="Yamamoto J."/>
            <person name="Saito K."/>
            <person name="Kawai Y."/>
            <person name="Isono Y."/>
            <person name="Nakamura Y."/>
            <person name="Nagahari K."/>
            <person name="Murakami K."/>
            <person name="Yasuda T."/>
            <person name="Iwayanagi T."/>
            <person name="Wagatsuma M."/>
            <person name="Shiratori A."/>
            <person name="Sudo H."/>
            <person name="Hosoiri T."/>
            <person name="Kaku Y."/>
            <person name="Kodaira H."/>
            <person name="Kondo H."/>
            <person name="Sugawara M."/>
            <person name="Takahashi M."/>
            <person name="Kanda K."/>
            <person name="Yokoi T."/>
            <person name="Furuya T."/>
            <person name="Kikkawa E."/>
            <person name="Omura Y."/>
            <person name="Abe K."/>
            <person name="Kamihara K."/>
            <person name="Katsuta N."/>
            <person name="Sato K."/>
            <person name="Tanikawa M."/>
            <person name="Yamazaki M."/>
            <person name="Ninomiya K."/>
            <person name="Ishibashi T."/>
            <person name="Yamashita H."/>
            <person name="Murakawa K."/>
            <person name="Fujimori K."/>
            <person name="Tanai H."/>
            <person name="Kimata M."/>
            <person name="Watanabe M."/>
            <person name="Hiraoka S."/>
            <person name="Chiba Y."/>
            <person name="Ishida S."/>
            <person name="Ono Y."/>
            <person name="Takiguchi S."/>
            <person name="Watanabe S."/>
            <person name="Yosida M."/>
            <person name="Hotuta T."/>
            <person name="Kusano J."/>
            <person name="Kanehori K."/>
            <person name="Takahashi-Fujii A."/>
            <person name="Hara H."/>
            <person name="Tanase T.-O."/>
            <person name="Nomura Y."/>
            <person name="Togiya S."/>
            <person name="Komai F."/>
            <person name="Hara R."/>
            <person name="Takeuchi K."/>
            <person name="Arita M."/>
            <person name="Imose N."/>
            <person name="Musashino K."/>
            <person name="Yuuki H."/>
            <person name="Oshima A."/>
            <person name="Sasaki N."/>
            <person name="Aotsuka S."/>
            <person name="Yoshikawa Y."/>
            <person name="Matsunawa H."/>
            <person name="Ichihara T."/>
            <person name="Shiohata N."/>
            <person name="Sano S."/>
            <person name="Moriya S."/>
            <person name="Momiyama H."/>
            <person name="Satoh N."/>
            <person name="Takami S."/>
            <person name="Terashima Y."/>
            <person name="Suzuki O."/>
            <person name="Nakagawa S."/>
            <person name="Senoh A."/>
            <person name="Mizoguchi H."/>
            <person name="Goto Y."/>
            <person name="Shimizu F."/>
            <person name="Wakebe H."/>
            <person name="Hishigaki H."/>
            <person name="Watanabe T."/>
            <person name="Sugiyama A."/>
            <person name="Takemoto M."/>
            <person name="Kawakami B."/>
            <person name="Yamazaki M."/>
            <person name="Watanabe K."/>
            <person name="Kumagai A."/>
            <person name="Itakura S."/>
            <person name="Fukuzumi Y."/>
            <person name="Fujimori Y."/>
            <person name="Komiyama M."/>
            <person name="Tashiro H."/>
            <person name="Tanigami A."/>
            <person name="Fujiwara T."/>
            <person name="Ono T."/>
            <person name="Yamada K."/>
            <person name="Fujii Y."/>
            <person name="Ozaki K."/>
            <person name="Hirao M."/>
            <person name="Ohmori Y."/>
            <person name="Kawabata A."/>
            <person name="Hikiji T."/>
            <person name="Kobatake N."/>
            <person name="Inagaki H."/>
            <person name="Ikema Y."/>
            <person name="Okamoto S."/>
            <person name="Okitani R."/>
            <person name="Kawakami T."/>
            <person name="Noguchi S."/>
            <person name="Itoh T."/>
            <person name="Shigeta K."/>
            <person name="Senba T."/>
            <person name="Matsumura K."/>
            <person name="Nakajima Y."/>
            <person name="Mizuno T."/>
            <person name="Morinaga M."/>
            <person name="Sasaki M."/>
            <person name="Togashi T."/>
            <person name="Oyama M."/>
            <person name="Hata H."/>
            <person name="Watanabe M."/>
            <person name="Komatsu T."/>
            <person name="Mizushima-Sugano J."/>
            <person name="Satoh T."/>
            <person name="Shirai Y."/>
            <person name="Takahashi Y."/>
            <person name="Nakagawa K."/>
            <person name="Okumura K."/>
            <person name="Nagase T."/>
            <person name="Nomura N."/>
            <person name="Kikuchi H."/>
            <person name="Masuho Y."/>
            <person name="Yamashita R."/>
            <person name="Nakai K."/>
            <person name="Yada T."/>
            <person name="Nakamura Y."/>
            <person name="Ohara O."/>
            <person name="Isogai T."/>
            <person name="Sugano S."/>
        </authorList>
    </citation>
    <scope>NUCLEOTIDE SEQUENCE [LARGE SCALE MRNA] (ISOFORM 3)</scope>
    <source>
        <tissue>Testis</tissue>
    </source>
</reference>
<reference key="2">
    <citation type="submission" date="2008-04" db="EMBL/GenBank/DDBJ databases">
        <authorList>
            <person name="Li J.Y."/>
            <person name="Wang H.Y."/>
            <person name="Liu F.J."/>
            <person name="Liu J."/>
        </authorList>
    </citation>
    <scope>NUCLEOTIDE SEQUENCE [LARGE SCALE MRNA] (ISOFORM 3)</scope>
    <source>
        <tissue>Epididymis</tissue>
    </source>
</reference>
<reference key="3">
    <citation type="journal article" date="2006" name="Nature">
        <title>The finished DNA sequence of human chromosome 12.</title>
        <authorList>
            <person name="Scherer S.E."/>
            <person name="Muzny D.M."/>
            <person name="Buhay C.J."/>
            <person name="Chen R."/>
            <person name="Cree A."/>
            <person name="Ding Y."/>
            <person name="Dugan-Rocha S."/>
            <person name="Gill R."/>
            <person name="Gunaratne P."/>
            <person name="Harris R.A."/>
            <person name="Hawes A.C."/>
            <person name="Hernandez J."/>
            <person name="Hodgson A.V."/>
            <person name="Hume J."/>
            <person name="Jackson A."/>
            <person name="Khan Z.M."/>
            <person name="Kovar-Smith C."/>
            <person name="Lewis L.R."/>
            <person name="Lozado R.J."/>
            <person name="Metzker M.L."/>
            <person name="Milosavljevic A."/>
            <person name="Miner G.R."/>
            <person name="Montgomery K.T."/>
            <person name="Morgan M.B."/>
            <person name="Nazareth L.V."/>
            <person name="Scott G."/>
            <person name="Sodergren E."/>
            <person name="Song X.-Z."/>
            <person name="Steffen D."/>
            <person name="Lovering R.C."/>
            <person name="Wheeler D.A."/>
            <person name="Worley K.C."/>
            <person name="Yuan Y."/>
            <person name="Zhang Z."/>
            <person name="Adams C.Q."/>
            <person name="Ansari-Lari M.A."/>
            <person name="Ayele M."/>
            <person name="Brown M.J."/>
            <person name="Chen G."/>
            <person name="Chen Z."/>
            <person name="Clerc-Blankenburg K.P."/>
            <person name="Davis C."/>
            <person name="Delgado O."/>
            <person name="Dinh H.H."/>
            <person name="Draper H."/>
            <person name="Gonzalez-Garay M.L."/>
            <person name="Havlak P."/>
            <person name="Jackson L.R."/>
            <person name="Jacob L.S."/>
            <person name="Kelly S.H."/>
            <person name="Li L."/>
            <person name="Li Z."/>
            <person name="Liu J."/>
            <person name="Liu W."/>
            <person name="Lu J."/>
            <person name="Maheshwari M."/>
            <person name="Nguyen B.-V."/>
            <person name="Okwuonu G.O."/>
            <person name="Pasternak S."/>
            <person name="Perez L.M."/>
            <person name="Plopper F.J.H."/>
            <person name="Santibanez J."/>
            <person name="Shen H."/>
            <person name="Tabor P.E."/>
            <person name="Verduzco D."/>
            <person name="Waldron L."/>
            <person name="Wang Q."/>
            <person name="Williams G.A."/>
            <person name="Zhang J."/>
            <person name="Zhou J."/>
            <person name="Allen C.C."/>
            <person name="Amin A.G."/>
            <person name="Anyalebechi V."/>
            <person name="Bailey M."/>
            <person name="Barbaria J.A."/>
            <person name="Bimage K.E."/>
            <person name="Bryant N.P."/>
            <person name="Burch P.E."/>
            <person name="Burkett C.E."/>
            <person name="Burrell K.L."/>
            <person name="Calderon E."/>
            <person name="Cardenas V."/>
            <person name="Carter K."/>
            <person name="Casias K."/>
            <person name="Cavazos I."/>
            <person name="Cavazos S.R."/>
            <person name="Ceasar H."/>
            <person name="Chacko J."/>
            <person name="Chan S.N."/>
            <person name="Chavez D."/>
            <person name="Christopoulos C."/>
            <person name="Chu J."/>
            <person name="Cockrell R."/>
            <person name="Cox C.D."/>
            <person name="Dang M."/>
            <person name="Dathorne S.R."/>
            <person name="David R."/>
            <person name="Davis C.M."/>
            <person name="Davy-Carroll L."/>
            <person name="Deshazo D.R."/>
            <person name="Donlin J.E."/>
            <person name="D'Souza L."/>
            <person name="Eaves K.A."/>
            <person name="Egan A."/>
            <person name="Emery-Cohen A.J."/>
            <person name="Escotto M."/>
            <person name="Flagg N."/>
            <person name="Forbes L.D."/>
            <person name="Gabisi A.M."/>
            <person name="Garza M."/>
            <person name="Hamilton C."/>
            <person name="Henderson N."/>
            <person name="Hernandez O."/>
            <person name="Hines S."/>
            <person name="Hogues M.E."/>
            <person name="Huang M."/>
            <person name="Idlebird D.G."/>
            <person name="Johnson R."/>
            <person name="Jolivet A."/>
            <person name="Jones S."/>
            <person name="Kagan R."/>
            <person name="King L.M."/>
            <person name="Leal B."/>
            <person name="Lebow H."/>
            <person name="Lee S."/>
            <person name="LeVan J.M."/>
            <person name="Lewis L.C."/>
            <person name="London P."/>
            <person name="Lorensuhewa L.M."/>
            <person name="Loulseged H."/>
            <person name="Lovett D.A."/>
            <person name="Lucier A."/>
            <person name="Lucier R.L."/>
            <person name="Ma J."/>
            <person name="Madu R.C."/>
            <person name="Mapua P."/>
            <person name="Martindale A.D."/>
            <person name="Martinez E."/>
            <person name="Massey E."/>
            <person name="Mawhiney S."/>
            <person name="Meador M.G."/>
            <person name="Mendez S."/>
            <person name="Mercado C."/>
            <person name="Mercado I.C."/>
            <person name="Merritt C.E."/>
            <person name="Miner Z.L."/>
            <person name="Minja E."/>
            <person name="Mitchell T."/>
            <person name="Mohabbat F."/>
            <person name="Mohabbat K."/>
            <person name="Montgomery B."/>
            <person name="Moore N."/>
            <person name="Morris S."/>
            <person name="Munidasa M."/>
            <person name="Ngo R.N."/>
            <person name="Nguyen N.B."/>
            <person name="Nickerson E."/>
            <person name="Nwaokelemeh O.O."/>
            <person name="Nwokenkwo S."/>
            <person name="Obregon M."/>
            <person name="Oguh M."/>
            <person name="Oragunye N."/>
            <person name="Oviedo R.J."/>
            <person name="Parish B.J."/>
            <person name="Parker D.N."/>
            <person name="Parrish J."/>
            <person name="Parks K.L."/>
            <person name="Paul H.A."/>
            <person name="Payton B.A."/>
            <person name="Perez A."/>
            <person name="Perrin W."/>
            <person name="Pickens A."/>
            <person name="Primus E.L."/>
            <person name="Pu L.-L."/>
            <person name="Puazo M."/>
            <person name="Quiles M.M."/>
            <person name="Quiroz J.B."/>
            <person name="Rabata D."/>
            <person name="Reeves K."/>
            <person name="Ruiz S.J."/>
            <person name="Shao H."/>
            <person name="Sisson I."/>
            <person name="Sonaike T."/>
            <person name="Sorelle R.P."/>
            <person name="Sutton A.E."/>
            <person name="Svatek A.F."/>
            <person name="Svetz L.A."/>
            <person name="Tamerisa K.S."/>
            <person name="Taylor T.R."/>
            <person name="Teague B."/>
            <person name="Thomas N."/>
            <person name="Thorn R.D."/>
            <person name="Trejos Z.Y."/>
            <person name="Trevino B.K."/>
            <person name="Ukegbu O.N."/>
            <person name="Urban J.B."/>
            <person name="Vasquez L.I."/>
            <person name="Vera V.A."/>
            <person name="Villasana D.M."/>
            <person name="Wang L."/>
            <person name="Ward-Moore S."/>
            <person name="Warren J.T."/>
            <person name="Wei X."/>
            <person name="White F."/>
            <person name="Williamson A.L."/>
            <person name="Wleczyk R."/>
            <person name="Wooden H.S."/>
            <person name="Wooden S.H."/>
            <person name="Yen J."/>
            <person name="Yoon L."/>
            <person name="Yoon V."/>
            <person name="Zorrilla S.E."/>
            <person name="Nelson D."/>
            <person name="Kucherlapati R."/>
            <person name="Weinstock G."/>
            <person name="Gibbs R.A."/>
        </authorList>
    </citation>
    <scope>NUCLEOTIDE SEQUENCE [LARGE SCALE GENOMIC DNA]</scope>
</reference>
<reference key="4">
    <citation type="journal article" date="2004" name="Genome Res.">
        <title>The status, quality, and expansion of the NIH full-length cDNA project: the Mammalian Gene Collection (MGC).</title>
        <authorList>
            <consortium name="The MGC Project Team"/>
        </authorList>
    </citation>
    <scope>NUCLEOTIDE SEQUENCE [LARGE SCALE MRNA] (ISOFORMS 1 AND 2)</scope>
    <source>
        <tissue>Testis</tissue>
    </source>
</reference>
<reference key="5">
    <citation type="journal article" date="2023" name="Cell Discov.">
        <title>Loss-of-function variants in human C12orf40 cause male infertility by blocking meiotic progression.</title>
        <authorList>
            <person name="Tu C."/>
            <person name="Wen J."/>
            <person name="Wang W."/>
            <person name="Zhu Q."/>
            <person name="Chen Y."/>
            <person name="Cheng J."/>
            <person name="Li Z."/>
            <person name="Meng L."/>
            <person name="Li Y."/>
            <person name="He W."/>
            <person name="Tan C."/>
            <person name="Xie C."/>
            <person name="Fu S.M."/>
            <person name="Du J."/>
            <person name="Lu G."/>
            <person name="Lin G."/>
            <person name="Gou L.T."/>
            <person name="Tan Y.Q."/>
        </authorList>
    </citation>
    <scope>INVOLVEMENT IN AZOOSPERMIA</scope>
</reference>
<reference key="6">
    <citation type="journal article" date="2023" name="Cell Discov.">
        <title>A novel recombination protein C12ORF40/REDIC1 is required for meiotic crossover formation.</title>
        <authorList>
            <person name="Fan S."/>
            <person name="Wang Y."/>
            <person name="Jiang H."/>
            <person name="Jiang X."/>
            <person name="Zhou J."/>
            <person name="Jiao Y."/>
            <person name="Ye J."/>
            <person name="Xu Z."/>
            <person name="Wang Y."/>
            <person name="Xie X."/>
            <person name="Zhang H."/>
            <person name="Li Y."/>
            <person name="Liu W."/>
            <person name="Zhang X."/>
            <person name="Ma H."/>
            <person name="Shi B."/>
            <person name="Zhang Y."/>
            <person name="Zubair M."/>
            <person name="Shah W."/>
            <person name="Xu Z."/>
            <person name="Xu B."/>
            <person name="Shi Q."/>
        </authorList>
    </citation>
    <scope>INVOLVEMENT IN AZOOSPERMIA</scope>
</reference>
<feature type="chain" id="PRO_0000348051" description="Regulator of DNA class I crossover intermediates 1">
    <location>
        <begin position="1"/>
        <end position="652"/>
    </location>
</feature>
<feature type="DNA-binding region" description="Binds DNA containing a D-loop" evidence="1">
    <location>
        <begin position="1"/>
        <end position="231"/>
    </location>
</feature>
<feature type="region of interest" description="Disordered" evidence="2">
    <location>
        <begin position="363"/>
        <end position="434"/>
    </location>
</feature>
<feature type="region of interest" description="Disordered" evidence="2">
    <location>
        <begin position="469"/>
        <end position="506"/>
    </location>
</feature>
<feature type="compositionally biased region" description="Basic and acidic residues" evidence="2">
    <location>
        <begin position="377"/>
        <end position="388"/>
    </location>
</feature>
<feature type="compositionally biased region" description="Polar residues" evidence="2">
    <location>
        <begin position="389"/>
        <end position="401"/>
    </location>
</feature>
<feature type="compositionally biased region" description="Basic and acidic residues" evidence="2">
    <location>
        <begin position="402"/>
        <end position="417"/>
    </location>
</feature>
<feature type="compositionally biased region" description="Low complexity" evidence="2">
    <location>
        <begin position="473"/>
        <end position="498"/>
    </location>
</feature>
<feature type="splice variant" id="VSP_035082" description="In isoform 3." evidence="5 8">
    <location>
        <begin position="1"/>
        <end position="77"/>
    </location>
</feature>
<feature type="splice variant" id="VSP_035083" description="In isoform 3." evidence="5 8">
    <original>MGNIPSEELHSKQSWDFGLDEILMEEGGIYSLKSKRISTKKIS</original>
    <variation>IWCTKCSEFKVIFTLIHYVLMLNLFLKSLRTAFQAFLNNDLQL</variation>
    <location>
        <begin position="429"/>
        <end position="471"/>
    </location>
</feature>
<feature type="splice variant" id="VSP_035084" description="In isoform 2." evidence="6">
    <original>SLDSAQS</original>
    <variation>CQYNCIS</variation>
    <location>
        <begin position="471"/>
        <end position="477"/>
    </location>
</feature>
<feature type="splice variant" id="VSP_035086" description="In isoform 3." evidence="5 8">
    <location>
        <begin position="472"/>
        <end position="652"/>
    </location>
</feature>
<feature type="splice variant" id="VSP_035085" description="In isoform 2." evidence="6">
    <location>
        <begin position="478"/>
        <end position="652"/>
    </location>
</feature>
<feature type="sequence variant" id="VAR_061610" description="In dbSNP:rs58302581.">
    <original>I</original>
    <variation>L</variation>
    <location>
        <position position="13"/>
    </location>
</feature>
<comment type="function">
    <text evidence="1">Involved in recombination, probably acting by stabilizing recombination intermediates during meiotic crossover formation. Required for normal germline development and fertility. Required for meiotic progression, complete chromosomal synapsis and crossover formation. Binds double-stranded DNA. However, also binds branched DNA molecules, such as those containing a D-loop or Holliday junction structure. Probably not required for formation of DNA double-strand breaks (DSBs). Also binds RNA in an RNA structure-independent manner, with a preference for binding 3'-UTR regions of mRNAs; may stabilize bound RNAs.</text>
</comment>
<comment type="subunit">
    <text evidence="1">Interacts with MSH5. Interacts with TEX11.</text>
</comment>
<comment type="interaction">
    <interactant intactId="EBI-10286004">
        <id>Q86WS4</id>
    </interactant>
    <interactant intactId="EBI-349105">
        <id>P63167</id>
        <label>DYNLL1</label>
    </interactant>
    <organismsDiffer>false</organismsDiffer>
    <experiments>3</experiments>
</comment>
<comment type="interaction">
    <interactant intactId="EBI-10286004">
        <id>Q86WS4</id>
    </interactant>
    <interactant intactId="EBI-742371">
        <id>Q96FJ2</id>
        <label>DYNLL2</label>
    </interactant>
    <organismsDiffer>false</organismsDiffer>
    <experiments>4</experiments>
</comment>
<comment type="interaction">
    <interactant intactId="EBI-10286004">
        <id>Q86WS4</id>
    </interactant>
    <interactant intactId="EBI-2798728">
        <id>P61968</id>
        <label>LMO4</label>
    </interactant>
    <organismsDiffer>false</organismsDiffer>
    <experiments>3</experiments>
</comment>
<comment type="interaction">
    <interactant intactId="EBI-10286004">
        <id>Q86WS4</id>
    </interactant>
    <interactant intactId="EBI-398874">
        <id>Q9UBU9</id>
        <label>NXF1</label>
    </interactant>
    <organismsDiffer>false</organismsDiffer>
    <experiments>3</experiments>
</comment>
<comment type="interaction">
    <interactant intactId="EBI-10286004">
        <id>Q86WS4</id>
    </interactant>
    <interactant intactId="EBI-12076664">
        <id>O14787-2</id>
        <label>TNPO2</label>
    </interactant>
    <organismsDiffer>false</organismsDiffer>
    <experiments>3</experiments>
</comment>
<comment type="subcellular location">
    <subcellularLocation>
        <location evidence="1">Chromosome</location>
    </subcellularLocation>
    <text evidence="1">In pachytene spermatocytes, localized along autosomal axes and the synapsed pseudoautosomal region on sex chromosomes, decreasing rapidly after early pachytene, by mid- or late pachytene, and disappearing in the diplotene stage. Also detected on the paired regions of homologous chromosomes in zygotene and pachytene oocytes, colocalizing with MSH4. Chromosomal localization of REDIC1 is mainly dependent on meiotic DNA double-strand breaks (DSBs) and interhomolog strand invasion. In spermatocytes from early zygotene to early pachytene, more than 90% of REDIC1 foci colocalize with RPA2. Probably localizes first to recombination intermediates and later colocalizes with MLH1 at crossover sites.</text>
</comment>
<comment type="alternative products">
    <event type="alternative splicing"/>
    <isoform>
        <id>Q86WS4-1</id>
        <name>1</name>
        <sequence type="displayed"/>
    </isoform>
    <isoform>
        <id>Q86WS4-2</id>
        <name>2</name>
        <sequence type="described" ref="VSP_035084 VSP_035085"/>
    </isoform>
    <isoform>
        <id>Q86WS4-3</id>
        <name>3</name>
        <name>HEL-206</name>
        <sequence type="described" ref="VSP_035082 VSP_035083 VSP_035086"/>
    </isoform>
</comment>
<comment type="disease">
    <text evidence="3 4">Defects in this gene may cause non-obstructive azoospermia.</text>
</comment>
<comment type="miscellaneous">
    <text evidence="4">Incomplete or abnormal chromosome synapsis and significantly fewer MLH1 foci observed in spermatocytes from a case of non-obstructive azoospermia.</text>
</comment>
<comment type="sequence caution" evidence="9">
    <conflict type="erroneous initiation">
        <sequence resource="EMBL-CDS" id="AAH38754"/>
    </conflict>
</comment>
<name>RDIC1_HUMAN</name>
<sequence>MNWVGGSRSRVLIKQERRKQKEYFEKHRLKSKMKSLGVLSPVKNSAVSLDILNLYMVNQISCKKKIPETVRKPTHVNMNRDIKMPLRKHNLELTMSPHCVPSKLCLDDTETNVNCQRLSSKEDLGPVQSQGMDSYSMLHPQFSKIENCSFTPSSFSVELPSNRHISKLNFTSGIAPTPQKLAYEKKQNDQRSTVNCSDSLLSKLNKSQDVFSPSHKTTRFGTLFERLNSLGNRNLLTKSPAVIMDEDCRSTDEIRQSDYITEKHSIQHIWGKNGKEVSNFLEDVNQSTPNLLSENCDSFVSQNMINVLNIDEQRIKKTFNKCDYDSMGDTCVVTSSDKNHVTDRCIRNIFTVPELTFSNSTLNKTSYPEKCQPNKKYQREYNKNERNDLSTSFENDYYPSSSERKEKFENDYQEKTPQKSIQKYPANSMGNIPSEELHSKQSWDFGLDEILMEEGGIYSLKSKRISTKKISLDSAQSSRSTSYSPRPTDSCFSSSSDLPSEDEDQISQQIEDSNRMTIKTKEKMNNFYVERMAKLSGDRIVKNDDKIHKQNENFYQFSVKNNTDQFPQLQCNSAHILQNKTNDNCVLQAARCDAGIQTESESVMEEKLDVAIQCDLISKCTCRSDVSLCNLERCSGNIKADTTGGQEIHKNN</sequence>
<accession>Q86WS4</accession>
<accession>B7WNU1</accession>
<accession>Q8IXY6</accession>
<accession>Q8N818</accession>
<accession>V9HW02</accession>
<organism>
    <name type="scientific">Homo sapiens</name>
    <name type="common">Human</name>
    <dbReference type="NCBI Taxonomy" id="9606"/>
    <lineage>
        <taxon>Eukaryota</taxon>
        <taxon>Metazoa</taxon>
        <taxon>Chordata</taxon>
        <taxon>Craniata</taxon>
        <taxon>Vertebrata</taxon>
        <taxon>Euteleostomi</taxon>
        <taxon>Mammalia</taxon>
        <taxon>Eutheria</taxon>
        <taxon>Euarchontoglires</taxon>
        <taxon>Primates</taxon>
        <taxon>Haplorrhini</taxon>
        <taxon>Catarrhini</taxon>
        <taxon>Hominidae</taxon>
        <taxon>Homo</taxon>
    </lineage>
</organism>
<dbReference type="EMBL" id="AK097445">
    <property type="protein sequence ID" value="BAC05057.1"/>
    <property type="molecule type" value="mRNA"/>
</dbReference>
<dbReference type="EMBL" id="EU668334">
    <property type="protein sequence ID" value="ACF94487.1"/>
    <property type="molecule type" value="mRNA"/>
</dbReference>
<dbReference type="EMBL" id="AC125491">
    <property type="status" value="NOT_ANNOTATED_CDS"/>
    <property type="molecule type" value="Genomic_DNA"/>
</dbReference>
<dbReference type="EMBL" id="BC038754">
    <property type="protein sequence ID" value="AAH38754.2"/>
    <property type="status" value="ALT_INIT"/>
    <property type="molecule type" value="mRNA"/>
</dbReference>
<dbReference type="EMBL" id="BC048120">
    <property type="protein sequence ID" value="AAH48120.3"/>
    <property type="molecule type" value="mRNA"/>
</dbReference>
<dbReference type="CCDS" id="CCDS41770.1">
    <molecule id="Q86WS4-1"/>
</dbReference>
<dbReference type="CCDS" id="CCDS81681.1">
    <molecule id="Q86WS4-2"/>
</dbReference>
<dbReference type="RefSeq" id="NP_001026918.2">
    <molecule id="Q86WS4-1"/>
    <property type="nucleotide sequence ID" value="NM_001031748.4"/>
</dbReference>
<dbReference type="RefSeq" id="NP_001306176.1">
    <molecule id="Q86WS4-2"/>
    <property type="nucleotide sequence ID" value="NM_001319247.2"/>
</dbReference>
<dbReference type="SMR" id="Q86WS4"/>
<dbReference type="BioGRID" id="129571">
    <property type="interactions" value="6"/>
</dbReference>
<dbReference type="FunCoup" id="Q86WS4">
    <property type="interactions" value="15"/>
</dbReference>
<dbReference type="IntAct" id="Q86WS4">
    <property type="interactions" value="5"/>
</dbReference>
<dbReference type="STRING" id="9606.ENSP00000317671"/>
<dbReference type="GlyGen" id="Q86WS4">
    <property type="glycosylation" value="1 site"/>
</dbReference>
<dbReference type="iPTMnet" id="Q86WS4"/>
<dbReference type="PhosphoSitePlus" id="Q86WS4"/>
<dbReference type="BioMuta" id="C12orf40"/>
<dbReference type="DMDM" id="121944433"/>
<dbReference type="MassIVE" id="Q86WS4"/>
<dbReference type="PaxDb" id="9606-ENSP00000317671"/>
<dbReference type="PeptideAtlas" id="Q86WS4"/>
<dbReference type="ProteomicsDB" id="70196">
    <molecule id="Q86WS4-1"/>
</dbReference>
<dbReference type="Antibodypedia" id="24929">
    <property type="antibodies" value="73 antibodies from 16 providers"/>
</dbReference>
<dbReference type="DNASU" id="283461"/>
<dbReference type="Ensembl" id="ENST00000324616.9">
    <molecule id="Q86WS4-1"/>
    <property type="protein sequence ID" value="ENSP00000317671.5"/>
    <property type="gene ID" value="ENSG00000180116.15"/>
</dbReference>
<dbReference type="Ensembl" id="ENST00000405531.7">
    <molecule id="Q86WS4-2"/>
    <property type="protein sequence ID" value="ENSP00000383897.3"/>
    <property type="gene ID" value="ENSG00000180116.15"/>
</dbReference>
<dbReference type="Ensembl" id="ENST00000468200.2">
    <molecule id="Q86WS4-3"/>
    <property type="protein sequence ID" value="ENSP00000473371.1"/>
    <property type="gene ID" value="ENSG00000180116.15"/>
</dbReference>
<dbReference type="GeneID" id="283461"/>
<dbReference type="KEGG" id="hsa:283461"/>
<dbReference type="MANE-Select" id="ENST00000324616.9">
    <property type="protein sequence ID" value="ENSP00000317671.5"/>
    <property type="RefSeq nucleotide sequence ID" value="NM_001031748.4"/>
    <property type="RefSeq protein sequence ID" value="NP_001026918.2"/>
</dbReference>
<dbReference type="UCSC" id="uc001rmc.5">
    <molecule id="Q86WS4-1"/>
    <property type="organism name" value="human"/>
</dbReference>
<dbReference type="AGR" id="HGNC:26846"/>
<dbReference type="CTD" id="283461"/>
<dbReference type="DisGeNET" id="283461"/>
<dbReference type="GeneCards" id="REDIC1"/>
<dbReference type="HGNC" id="HGNC:26846">
    <property type="gene designation" value="REDIC1"/>
</dbReference>
<dbReference type="HPA" id="ENSG00000180116">
    <property type="expression patterns" value="Tissue enriched (testis)"/>
</dbReference>
<dbReference type="MalaCards" id="REDIC1"/>
<dbReference type="MIM" id="620495">
    <property type="type" value="gene"/>
</dbReference>
<dbReference type="neXtProt" id="NX_Q86WS4"/>
<dbReference type="OpenTargets" id="ENSG00000180116"/>
<dbReference type="PharmGKB" id="PA143485370"/>
<dbReference type="VEuPathDB" id="HostDB:ENSG00000180116"/>
<dbReference type="eggNOG" id="ENOG502S59G">
    <property type="taxonomic scope" value="Eukaryota"/>
</dbReference>
<dbReference type="GeneTree" id="ENSGT00390000002848"/>
<dbReference type="HOGENOM" id="CLU_052127_0_0_1"/>
<dbReference type="InParanoid" id="Q86WS4"/>
<dbReference type="OMA" id="IHVNMNR"/>
<dbReference type="OrthoDB" id="6430388at2759"/>
<dbReference type="PAN-GO" id="Q86WS4">
    <property type="GO annotations" value="0 GO annotations based on evolutionary models"/>
</dbReference>
<dbReference type="PhylomeDB" id="Q86WS4"/>
<dbReference type="TreeFam" id="TF336354"/>
<dbReference type="PathwayCommons" id="Q86WS4"/>
<dbReference type="SignaLink" id="Q86WS4"/>
<dbReference type="BioGRID-ORCS" id="283461">
    <property type="hits" value="23 hits in 1114 CRISPR screens"/>
</dbReference>
<dbReference type="ChiTaRS" id="C12orf40">
    <property type="organism name" value="human"/>
</dbReference>
<dbReference type="GenomeRNAi" id="283461"/>
<dbReference type="Pharos" id="Q86WS4">
    <property type="development level" value="Tdark"/>
</dbReference>
<dbReference type="PRO" id="PR:Q86WS4"/>
<dbReference type="Proteomes" id="UP000005640">
    <property type="component" value="Chromosome 12"/>
</dbReference>
<dbReference type="RNAct" id="Q86WS4">
    <property type="molecule type" value="protein"/>
</dbReference>
<dbReference type="Bgee" id="ENSG00000180116">
    <property type="expression patterns" value="Expressed in male germ line stem cell (sensu Vertebrata) in testis and 22 other cell types or tissues"/>
</dbReference>
<dbReference type="ExpressionAtlas" id="Q86WS4">
    <property type="expression patterns" value="baseline and differential"/>
</dbReference>
<dbReference type="GO" id="GO:0005694">
    <property type="term" value="C:chromosome"/>
    <property type="evidence" value="ECO:0007669"/>
    <property type="project" value="UniProtKB-SubCell"/>
</dbReference>
<dbReference type="GO" id="GO:0003677">
    <property type="term" value="F:DNA binding"/>
    <property type="evidence" value="ECO:0007669"/>
    <property type="project" value="UniProtKB-KW"/>
</dbReference>
<dbReference type="GO" id="GO:0003723">
    <property type="term" value="F:RNA binding"/>
    <property type="evidence" value="ECO:0007669"/>
    <property type="project" value="UniProtKB-KW"/>
</dbReference>
<dbReference type="GO" id="GO:0051321">
    <property type="term" value="P:meiotic cell cycle"/>
    <property type="evidence" value="ECO:0007669"/>
    <property type="project" value="UniProtKB-KW"/>
</dbReference>
<dbReference type="InterPro" id="IPR027883">
    <property type="entry name" value="Redic1-like"/>
</dbReference>
<dbReference type="PANTHER" id="PTHR35158">
    <property type="entry name" value="CDNA SEQUENCE CN725425"/>
    <property type="match status" value="1"/>
</dbReference>
<dbReference type="PANTHER" id="PTHR35158:SF1">
    <property type="entry name" value="CDNA SEQUENCE CN725425"/>
    <property type="match status" value="1"/>
</dbReference>
<dbReference type="Pfam" id="PF15089">
    <property type="entry name" value="Redic1-like"/>
    <property type="match status" value="1"/>
</dbReference>
<proteinExistence type="evidence at protein level"/>
<keyword id="KW-0025">Alternative splicing</keyword>
<keyword id="KW-0158">Chromosome</keyword>
<keyword id="KW-0238">DNA-binding</keyword>
<keyword id="KW-0469">Meiosis</keyword>
<keyword id="KW-1267">Proteomics identification</keyword>
<keyword id="KW-1185">Reference proteome</keyword>
<keyword id="KW-0694">RNA-binding</keyword>
<gene>
    <name evidence="7 10" type="primary">REDIC1</name>
    <name type="synonym">C12orf40</name>
</gene>
<protein>
    <recommendedName>
        <fullName>Regulator of DNA class I crossover intermediates 1</fullName>
    </recommendedName>
</protein>